<evidence type="ECO:0000305" key="1"/>
<feature type="chain" id="PRO_0000461148" description="Protein U67">
    <location>
        <begin position="1"/>
        <end position="353"/>
    </location>
</feature>
<sequence>MWVMSQVRSMEPDLTLAAVYQAAANLTEQDKEIFSEAVKTAFSVCSSAAPSARLRMIETPTQNFMFVTSVIPSGVPSGEKKTKLNIDAALDNLALSFANKKSKKMARTYLLQNVSRTQDQQVAISGTYILYTKKHIETSLMLDKTKLVKQILEYAETPNLLGYTDVRDLECLLWLVFCGPKSFCQSDSCFGYSKTGYNAAFPNLLPPYLYECGQNNGLFFGIVQAYVFSWYSDFDFSALEISERARRRIRSLLYDLKQKFSEQEISVLPVASQMCIFCALYKQNKLSLEYVSGDLKTSVFSPIIIKDCLCVQTTISTTQMLPGTKSSAIFPVYDLRKLLSALVISEGSVRFDI</sequence>
<organismHost>
    <name type="scientific">Homo sapiens</name>
    <name type="common">Human</name>
    <dbReference type="NCBI Taxonomy" id="9606"/>
</organismHost>
<name>UL95_HHV6H</name>
<organism>
    <name type="scientific">Human herpesvirus 6B</name>
    <name type="common">HHV-6 variant B</name>
    <name type="synonym">Human B lymphotropic virus</name>
    <dbReference type="NCBI Taxonomy" id="32604"/>
    <lineage>
        <taxon>Viruses</taxon>
        <taxon>Duplodnaviria</taxon>
        <taxon>Heunggongvirae</taxon>
        <taxon>Peploviricota</taxon>
        <taxon>Herviviricetes</taxon>
        <taxon>Herpesvirales</taxon>
        <taxon>Orthoherpesviridae</taxon>
        <taxon>Betaherpesvirinae</taxon>
        <taxon>Roseolovirus</taxon>
        <taxon>Roseolovirus humanbeta6b</taxon>
    </lineage>
</organism>
<protein>
    <recommendedName>
        <fullName>Protein U67</fullName>
    </recommendedName>
</protein>
<gene>
    <name type="primary">U67</name>
</gene>
<accession>P0DXM4</accession>
<accession>Q77PU7</accession>
<accession>Q9WT06</accession>
<proteinExistence type="inferred from homology"/>
<comment type="similarity">
    <text evidence="1">Belongs to the herpesviridae UL95 family.</text>
</comment>
<dbReference type="EMBL" id="AB021506">
    <property type="protein sequence ID" value="BAA78288.1"/>
    <property type="molecule type" value="Genomic_DNA"/>
</dbReference>
<dbReference type="PIR" id="T44027">
    <property type="entry name" value="T44027"/>
</dbReference>
<dbReference type="RefSeq" id="NP_050246.1">
    <property type="nucleotide sequence ID" value="NC_000898.1"/>
</dbReference>
<dbReference type="GeneID" id="1497067"/>
<dbReference type="KEGG" id="vg:1497067"/>
<dbReference type="Proteomes" id="UP000142685">
    <property type="component" value="Segment"/>
</dbReference>
<dbReference type="InterPro" id="IPR004280">
    <property type="entry name" value="Herpes_UL95"/>
</dbReference>
<dbReference type="Pfam" id="PF03038">
    <property type="entry name" value="Herpes_UL95"/>
    <property type="match status" value="1"/>
</dbReference>
<reference key="1">
    <citation type="journal article" date="1999" name="J. Virol.">
        <title>Comparison of the complete DNA sequences of human herpesvirus 6 variants A and B.</title>
        <authorList>
            <person name="Isegawa Y."/>
            <person name="Mukai T."/>
            <person name="Nakano K."/>
            <person name="Kagawa M."/>
            <person name="Chen J."/>
            <person name="Mori Y."/>
            <person name="Sunagawa T."/>
            <person name="Kawanishi K."/>
            <person name="Sashihara J."/>
            <person name="Hata A."/>
            <person name="Zou P."/>
            <person name="Kosuge H."/>
            <person name="Yamanishi K."/>
        </authorList>
    </citation>
    <scope>NUCLEOTIDE SEQUENCE [LARGE SCALE GENOMIC DNA]</scope>
    <source>
        <strain>HST</strain>
    </source>
</reference>